<accession>Q6PFK1</accession>
<accession>Q3S3B5</accession>
<protein>
    <recommendedName>
        <fullName evidence="1">E3 ubiquitin-protein ligase ZNF598</fullName>
        <ecNumber evidence="1">2.3.2.27</ecNumber>
    </recommendedName>
    <alternativeName>
        <fullName evidence="1">Zinc finger protein 598</fullName>
    </alternativeName>
</protein>
<gene>
    <name evidence="1" type="primary">znf598</name>
    <name evidence="1" type="synonym">zfp598</name>
</gene>
<name>ZN598_DANRE</name>
<keyword id="KW-0025">Alternative splicing</keyword>
<keyword id="KW-0963">Cytoplasm</keyword>
<keyword id="KW-0479">Metal-binding</keyword>
<keyword id="KW-0597">Phosphoprotein</keyword>
<keyword id="KW-1185">Reference proteome</keyword>
<keyword id="KW-0808">Transferase</keyword>
<keyword id="KW-0810">Translation regulation</keyword>
<keyword id="KW-0833">Ubl conjugation pathway</keyword>
<keyword id="KW-0862">Zinc</keyword>
<keyword id="KW-0863">Zinc-finger</keyword>
<dbReference type="EC" id="2.3.2.27" evidence="1"/>
<dbReference type="EMBL" id="BC057520">
    <property type="protein sequence ID" value="AAH57520.1"/>
    <property type="status" value="ALT_INIT"/>
    <property type="molecule type" value="mRNA"/>
</dbReference>
<dbReference type="EMBL" id="DQ173495">
    <property type="protein sequence ID" value="ABA00477.1"/>
    <property type="status" value="ALT_INIT"/>
    <property type="molecule type" value="mRNA"/>
</dbReference>
<dbReference type="RefSeq" id="NP_001028890.1">
    <property type="nucleotide sequence ID" value="NM_001033718.1"/>
</dbReference>
<dbReference type="FunCoup" id="Q6PFK1">
    <property type="interactions" value="1670"/>
</dbReference>
<dbReference type="STRING" id="7955.ENSDARP00000069243"/>
<dbReference type="iPTMnet" id="Q6PFK1"/>
<dbReference type="PaxDb" id="7955-ENSDARP00000069243"/>
<dbReference type="GeneID" id="407728"/>
<dbReference type="KEGG" id="dre:407728"/>
<dbReference type="AGR" id="ZFIN:ZDB-GENE-060602-3"/>
<dbReference type="CTD" id="90850"/>
<dbReference type="ZFIN" id="ZDB-GENE-060602-3">
    <property type="gene designation" value="znf598"/>
</dbReference>
<dbReference type="eggNOG" id="KOG2231">
    <property type="taxonomic scope" value="Eukaryota"/>
</dbReference>
<dbReference type="InParanoid" id="Q6PFK1"/>
<dbReference type="OrthoDB" id="3838338at2759"/>
<dbReference type="PhylomeDB" id="Q6PFK1"/>
<dbReference type="UniPathway" id="UPA00143"/>
<dbReference type="PRO" id="PR:Q6PFK1"/>
<dbReference type="Proteomes" id="UP000000437">
    <property type="component" value="Chromosome 3"/>
</dbReference>
<dbReference type="GO" id="GO:0005829">
    <property type="term" value="C:cytosol"/>
    <property type="evidence" value="ECO:0000250"/>
    <property type="project" value="UniProtKB"/>
</dbReference>
<dbReference type="GO" id="GO:0043022">
    <property type="term" value="F:ribosome binding"/>
    <property type="evidence" value="ECO:0000250"/>
    <property type="project" value="UniProtKB"/>
</dbReference>
<dbReference type="GO" id="GO:0061630">
    <property type="term" value="F:ubiquitin protein ligase activity"/>
    <property type="evidence" value="ECO:0000250"/>
    <property type="project" value="UniProtKB"/>
</dbReference>
<dbReference type="GO" id="GO:0008270">
    <property type="term" value="F:zinc ion binding"/>
    <property type="evidence" value="ECO:0007669"/>
    <property type="project" value="UniProtKB-KW"/>
</dbReference>
<dbReference type="GO" id="GO:0070534">
    <property type="term" value="P:protein K63-linked ubiquitination"/>
    <property type="evidence" value="ECO:0000250"/>
    <property type="project" value="UniProtKB"/>
</dbReference>
<dbReference type="GO" id="GO:0006513">
    <property type="term" value="P:protein monoubiquitination"/>
    <property type="evidence" value="ECO:0000250"/>
    <property type="project" value="UniProtKB"/>
</dbReference>
<dbReference type="GO" id="GO:0016567">
    <property type="term" value="P:protein ubiquitination"/>
    <property type="evidence" value="ECO:0000250"/>
    <property type="project" value="UniProtKB"/>
</dbReference>
<dbReference type="GO" id="GO:0006417">
    <property type="term" value="P:regulation of translation"/>
    <property type="evidence" value="ECO:0007669"/>
    <property type="project" value="UniProtKB-KW"/>
</dbReference>
<dbReference type="GO" id="GO:0072344">
    <property type="term" value="P:rescue of stalled ribosome"/>
    <property type="evidence" value="ECO:0000250"/>
    <property type="project" value="UniProtKB"/>
</dbReference>
<dbReference type="GO" id="GO:1990116">
    <property type="term" value="P:ribosome-associated ubiquitin-dependent protein catabolic process"/>
    <property type="evidence" value="ECO:0000250"/>
    <property type="project" value="UniProtKB"/>
</dbReference>
<dbReference type="CDD" id="cd16615">
    <property type="entry name" value="RING-HC_ZNF598"/>
    <property type="match status" value="1"/>
</dbReference>
<dbReference type="InterPro" id="IPR041888">
    <property type="entry name" value="RING-HC_ZNF598/Hel2"/>
</dbReference>
<dbReference type="InterPro" id="IPR044288">
    <property type="entry name" value="ZNF598/Hel2"/>
</dbReference>
<dbReference type="InterPro" id="IPR013087">
    <property type="entry name" value="Znf_C2H2_type"/>
</dbReference>
<dbReference type="InterPro" id="IPR001841">
    <property type="entry name" value="Znf_RING"/>
</dbReference>
<dbReference type="PANTHER" id="PTHR22938:SF0">
    <property type="entry name" value="E3 UBIQUITIN-PROTEIN LIGASE ZNF598"/>
    <property type="match status" value="1"/>
</dbReference>
<dbReference type="PANTHER" id="PTHR22938">
    <property type="entry name" value="ZINC FINGER PROTEIN 598"/>
    <property type="match status" value="1"/>
</dbReference>
<dbReference type="Pfam" id="PF23202">
    <property type="entry name" value="PAH_ZNF598"/>
    <property type="match status" value="1"/>
</dbReference>
<dbReference type="Pfam" id="PF25447">
    <property type="entry name" value="RING_ZNF598"/>
    <property type="match status" value="1"/>
</dbReference>
<dbReference type="Pfam" id="PF23208">
    <property type="entry name" value="zf_C2H2_ZNF598"/>
    <property type="match status" value="1"/>
</dbReference>
<dbReference type="SMART" id="SM00355">
    <property type="entry name" value="ZnF_C2H2"/>
    <property type="match status" value="5"/>
</dbReference>
<dbReference type="PROSITE" id="PS50089">
    <property type="entry name" value="ZF_RING_2"/>
    <property type="match status" value="1"/>
</dbReference>
<dbReference type="PROSITE" id="PS00028">
    <property type="entry name" value="ZINC_FINGER_C2H2_1"/>
    <property type="match status" value="1"/>
</dbReference>
<evidence type="ECO:0000250" key="1">
    <source>
        <dbReference type="UniProtKB" id="Q86UK7"/>
    </source>
</evidence>
<evidence type="ECO:0000255" key="2">
    <source>
        <dbReference type="PROSITE-ProRule" id="PRU00042"/>
    </source>
</evidence>
<evidence type="ECO:0000255" key="3">
    <source>
        <dbReference type="PROSITE-ProRule" id="PRU00175"/>
    </source>
</evidence>
<evidence type="ECO:0000256" key="4">
    <source>
        <dbReference type="SAM" id="MobiDB-lite"/>
    </source>
</evidence>
<evidence type="ECO:0000269" key="5">
    <source>
    </source>
</evidence>
<evidence type="ECO:0000303" key="6">
    <source ref="1"/>
</evidence>
<evidence type="ECO:0000305" key="7"/>
<proteinExistence type="evidence at protein level"/>
<organism>
    <name type="scientific">Danio rerio</name>
    <name type="common">Zebrafish</name>
    <name type="synonym">Brachydanio rerio</name>
    <dbReference type="NCBI Taxonomy" id="7955"/>
    <lineage>
        <taxon>Eukaryota</taxon>
        <taxon>Metazoa</taxon>
        <taxon>Chordata</taxon>
        <taxon>Craniata</taxon>
        <taxon>Vertebrata</taxon>
        <taxon>Euteleostomi</taxon>
        <taxon>Actinopterygii</taxon>
        <taxon>Neopterygii</taxon>
        <taxon>Teleostei</taxon>
        <taxon>Ostariophysi</taxon>
        <taxon>Cypriniformes</taxon>
        <taxon>Danionidae</taxon>
        <taxon>Danioninae</taxon>
        <taxon>Danio</taxon>
    </lineage>
</organism>
<reference key="1">
    <citation type="submission" date="2003-09" db="EMBL/GenBank/DDBJ databases">
        <authorList>
            <consortium name="NIH - Zebrafish Gene Collection (ZGC) project"/>
        </authorList>
    </citation>
    <scope>NUCLEOTIDE SEQUENCE [LARGE SCALE MRNA] (ISOFORM 2)</scope>
    <source>
        <strain>SJD</strain>
    </source>
</reference>
<reference key="2">
    <citation type="submission" date="2005-08" db="EMBL/GenBank/DDBJ databases">
        <title>Purification and characterization of zebrafish ZFP598.</title>
        <authorList>
            <person name="Tsai S.C."/>
            <person name="Kang C.K."/>
            <person name="Ho H.C."/>
        </authorList>
    </citation>
    <scope>NUCLEOTIDE SEQUENCE [MRNA] OF 7-360 (ISOFORM 1)</scope>
</reference>
<reference key="3">
    <citation type="journal article" date="2008" name="J. Proteome Res.">
        <title>Online automated in vivo zebrafish phosphoproteomics: from large-scale analysis down to a single embryo.</title>
        <authorList>
            <person name="Lemeer S."/>
            <person name="Pinkse M.W.H."/>
            <person name="Mohammed S."/>
            <person name="van Breukelen B."/>
            <person name="den Hertog J."/>
            <person name="Slijper M."/>
            <person name="Heck A.J.R."/>
        </authorList>
    </citation>
    <scope>PHOSPHORYLATION [LARGE SCALE ANALYSIS] AT SER-489</scope>
    <scope>IDENTIFICATION BY MASS SPECTROMETRY</scope>
    <source>
        <tissue>Embryo</tissue>
    </source>
</reference>
<comment type="function">
    <text evidence="1">E3 ubiquitin-protein ligase that plays a key role in the ribosome quality control (RQC), a pathway that takes place when a ribosome has stalled during translation, leading to degradation of nascent peptide chains. ZNF598 is activated when ribosomes are stalled within an mRNA following translation of prematurely polyadenylated mRNAs. Acts as a ribosome collision sensor: specifically recognizes and binds collided di-ribosome, which arises when a trailing ribosome encounters a slower leading ribosome, leading to terminally arrest translation. Following binding to colliding ribosomes, mediates monoubiquitination of 40S ribosomal proteins RPS10/eS10 and RPS3/uS3, and 'Lys-63'-linked polyubiquitination of RPS20/uS10. Polyubiquitination of RPS20/uS10 promotes recruitment of the RQT (ribosome quality control trigger) complex, which drives the disassembly of stalled ribosomes, followed by degradation of nascent peptides.</text>
</comment>
<comment type="catalytic activity">
    <reaction evidence="1">
        <text>S-ubiquitinyl-[E2 ubiquitin-conjugating enzyme]-L-cysteine + [acceptor protein]-L-lysine = [E2 ubiquitin-conjugating enzyme]-L-cysteine + N(6)-ubiquitinyl-[acceptor protein]-L-lysine.</text>
        <dbReference type="EC" id="2.3.2.27"/>
    </reaction>
</comment>
<comment type="pathway">
    <text evidence="1">Protein modification; protein ubiquitination.</text>
</comment>
<comment type="subcellular location">
    <subcellularLocation>
        <location evidence="1">Cytoplasm</location>
        <location evidence="1">Cytosol</location>
    </subcellularLocation>
</comment>
<comment type="alternative products">
    <event type="alternative splicing"/>
    <isoform>
        <id>Q6PFK1-1</id>
        <name>1</name>
        <sequence type="displayed"/>
    </isoform>
    <isoform>
        <id>Q6PFK1-2</id>
        <name>2</name>
        <sequence type="described" ref="VSP_020668 VSP_020669"/>
    </isoform>
</comment>
<comment type="similarity">
    <text evidence="7">Belongs to the ZNF598/HEL2 family.</text>
</comment>
<comment type="sequence caution" evidence="7">
    <conflict type="erroneous initiation">
        <sequence resource="EMBL-CDS" id="AAH57520"/>
    </conflict>
</comment>
<comment type="sequence caution" evidence="7">
    <conflict type="erroneous initiation">
        <sequence resource="EMBL-CDS" id="ABA00477"/>
    </conflict>
</comment>
<feature type="chain" id="PRO_0000250570" description="E3 ubiquitin-protein ligase ZNF598">
    <location>
        <begin position="1"/>
        <end position="953"/>
    </location>
</feature>
<feature type="zinc finger region" description="RING-type" evidence="3">
    <location>
        <begin position="57"/>
        <end position="97"/>
    </location>
</feature>
<feature type="zinc finger region" description="C2H2-type" evidence="2">
    <location>
        <begin position="215"/>
        <end position="238"/>
    </location>
</feature>
<feature type="region of interest" description="Disordered" evidence="4">
    <location>
        <begin position="25"/>
        <end position="47"/>
    </location>
</feature>
<feature type="region of interest" description="Disordered" evidence="4">
    <location>
        <begin position="299"/>
        <end position="779"/>
    </location>
</feature>
<feature type="region of interest" description="Disordered" evidence="4">
    <location>
        <begin position="884"/>
        <end position="911"/>
    </location>
</feature>
<feature type="compositionally biased region" description="Basic residues" evidence="4">
    <location>
        <begin position="25"/>
        <end position="39"/>
    </location>
</feature>
<feature type="compositionally biased region" description="Low complexity" evidence="4">
    <location>
        <begin position="371"/>
        <end position="380"/>
    </location>
</feature>
<feature type="compositionally biased region" description="Basic and acidic residues" evidence="4">
    <location>
        <begin position="381"/>
        <end position="409"/>
    </location>
</feature>
<feature type="compositionally biased region" description="Polar residues" evidence="4">
    <location>
        <begin position="410"/>
        <end position="431"/>
    </location>
</feature>
<feature type="compositionally biased region" description="Polar residues" evidence="4">
    <location>
        <begin position="467"/>
        <end position="483"/>
    </location>
</feature>
<feature type="compositionally biased region" description="Low complexity" evidence="4">
    <location>
        <begin position="508"/>
        <end position="518"/>
    </location>
</feature>
<feature type="compositionally biased region" description="Low complexity" evidence="4">
    <location>
        <begin position="536"/>
        <end position="553"/>
    </location>
</feature>
<feature type="compositionally biased region" description="Polar residues" evidence="4">
    <location>
        <begin position="555"/>
        <end position="564"/>
    </location>
</feature>
<feature type="compositionally biased region" description="Polar residues" evidence="4">
    <location>
        <begin position="641"/>
        <end position="650"/>
    </location>
</feature>
<feature type="compositionally biased region" description="Basic and acidic residues" evidence="4">
    <location>
        <begin position="655"/>
        <end position="666"/>
    </location>
</feature>
<feature type="compositionally biased region" description="Polar residues" evidence="4">
    <location>
        <begin position="695"/>
        <end position="711"/>
    </location>
</feature>
<feature type="compositionally biased region" description="Pro residues" evidence="4">
    <location>
        <begin position="747"/>
        <end position="765"/>
    </location>
</feature>
<feature type="compositionally biased region" description="Polar residues" evidence="4">
    <location>
        <begin position="770"/>
        <end position="779"/>
    </location>
</feature>
<feature type="modified residue" description="Phosphoserine" evidence="5">
    <location>
        <position position="489"/>
    </location>
</feature>
<feature type="splice variant" id="VSP_020668" description="In isoform 2." evidence="6">
    <original>GPGGQQNLRSWR</original>
    <variation>VMALWLVRTSLS</variation>
    <location>
        <begin position="349"/>
        <end position="360"/>
    </location>
</feature>
<feature type="splice variant" id="VSP_020669" description="In isoform 2." evidence="6">
    <location>
        <begin position="361"/>
        <end position="953"/>
    </location>
</feature>
<sequence>MHCAERLRTEERASPGLIACTAVHKPSKSTRIKPTKPHHTPSNSMESALKKDTESTCVLCCQDIDLFAVGKCDHPVCYRCSTKMRVLCEQKYCAVCREQLDKVVFLRKPEAFATLNIHHYQCEKKYDIYFGDGKVHAQFRKILLNECPHCPEPKVFSKFEELEQHMRKQHELFCCKLCLKHLKIFSYERKWYSRKDLARHRMQGDPDDTSHRGHPLCKFCDDRYLDNDELLKHLRRDHYFCHFCDADGAQEYYSDYQYLSEHFRESHYLCEEGRCSTEQFTHAFRTEIDYKAHKAAAHSKNRAEARQNRQIDIQFNYAPRQQRRNDVGGDDYEEVDRFNRQGRPGRGRGPGGQQNLRSWRYNREEEDREMAAAMRASMASHQEERSHAQERSMLKPRREEKLEPDETRNNRSTARPTNDTQARSMKSNGSLAGQDFPVLGAGAPPAPVQSMIQKPSVSLKEDDFPSLSGSVVSSPMTPAYTNQPRKHSSFQEEDFPALVSKIKPLKPQSSAASAWSQAGSKPVVAPNKPVVLPTKMTPMSSSSILSSTDPLPSASVPQPLTASSSRRKKMLTLTESHKDPPKIRCPSSSDDEDPHSGKTAQEIRTVPTMLDISTLLTVKGSSPQANPKASKKKKQTTASSLGSPSHTPETVSKMAHKENVPEKKPPETGLNKAPTAPKTNSIVNGVAEKPAEALSCTSFPENITSSKQPVTDQAPPSKEEEFPALISKKPPPGFKSAFPLRNSQSALPPPPPPGLGPAVSKPPPGFTGVPLNSNVEDSSVSAVNRPTPAIGSYLIPDHFQQRNMDLIQSIKNFLQNDETKFNEFKNYSGQFRQGALPAVQYYKSCQELLGENFNRVFNELLVLLPDTRKQQELLTAHGDFKALEKQQQGSKPKKSKKKAWQTGTSSSSSLDLDCQVCPTCKQVLALKDFNTHKTLHIGDDDFPSLQAISKIIS</sequence>